<protein>
    <recommendedName>
        <fullName evidence="1">Cysteine--tRNA ligase</fullName>
        <ecNumber evidence="1">6.1.1.16</ecNumber>
    </recommendedName>
    <alternativeName>
        <fullName evidence="1">Cysteinyl-tRNA synthetase</fullName>
        <shortName evidence="1">CysRS</shortName>
    </alternativeName>
</protein>
<name>SYC_STRPN</name>
<proteinExistence type="inferred from homology"/>
<organism>
    <name type="scientific">Streptococcus pneumoniae serotype 4 (strain ATCC BAA-334 / TIGR4)</name>
    <dbReference type="NCBI Taxonomy" id="170187"/>
    <lineage>
        <taxon>Bacteria</taxon>
        <taxon>Bacillati</taxon>
        <taxon>Bacillota</taxon>
        <taxon>Bacilli</taxon>
        <taxon>Lactobacillales</taxon>
        <taxon>Streptococcaceae</taxon>
        <taxon>Streptococcus</taxon>
    </lineage>
</organism>
<sequence length="447" mass="50995">MIKIYDTMSRDLREFVPIEDGKIKMYVCGPTVYNYIHVGNARSTVAFDTIRRYFEYRGYKVAYISNFTDVDDKIINRAREEGITPQEVADKYIAAFREDVTALGVKPATRHPRVVEFMADIIRFVEDLIEKGFAYESQGDVYFRVEKSHNYAKLANKTLEDLELGASGRTDEETARKENPVDFALWKSSKPGEISWDSPWGPGRPGWHIECSVMSTEILGDTIDIHGGGADLEFPHHTNEIAQSEAKTGKAFANYWMHNGFVNIDNVKMSKSLGNFITVHDALKTLDGQVLRFFFATQHYRKPINFTEKAVRDAETNLKYLKNTYEQPFTGNVDAQELQNFKDKFVAAMDEDFNAANGITVVFEMAKWINSGNYDASVKQALADMLEIFGIVFVEEVLDAEIEDLIQKRQEARANRDFATADQIRDQLVTQGIKLLDTKDGVRWTRD</sequence>
<reference key="1">
    <citation type="journal article" date="2001" name="Science">
        <title>Complete genome sequence of a virulent isolate of Streptococcus pneumoniae.</title>
        <authorList>
            <person name="Tettelin H."/>
            <person name="Nelson K.E."/>
            <person name="Paulsen I.T."/>
            <person name="Eisen J.A."/>
            <person name="Read T.D."/>
            <person name="Peterson S.N."/>
            <person name="Heidelberg J.F."/>
            <person name="DeBoy R.T."/>
            <person name="Haft D.H."/>
            <person name="Dodson R.J."/>
            <person name="Durkin A.S."/>
            <person name="Gwinn M.L."/>
            <person name="Kolonay J.F."/>
            <person name="Nelson W.C."/>
            <person name="Peterson J.D."/>
            <person name="Umayam L.A."/>
            <person name="White O."/>
            <person name="Salzberg S.L."/>
            <person name="Lewis M.R."/>
            <person name="Radune D."/>
            <person name="Holtzapple E.K."/>
            <person name="Khouri H.M."/>
            <person name="Wolf A.M."/>
            <person name="Utterback T.R."/>
            <person name="Hansen C.L."/>
            <person name="McDonald L.A."/>
            <person name="Feldblyum T.V."/>
            <person name="Angiuoli S.V."/>
            <person name="Dickinson T."/>
            <person name="Hickey E.K."/>
            <person name="Holt I.E."/>
            <person name="Loftus B.J."/>
            <person name="Yang F."/>
            <person name="Smith H.O."/>
            <person name="Venter J.C."/>
            <person name="Dougherty B.A."/>
            <person name="Morrison D.A."/>
            <person name="Hollingshead S.K."/>
            <person name="Fraser C.M."/>
        </authorList>
    </citation>
    <scope>NUCLEOTIDE SEQUENCE [LARGE SCALE GENOMIC DNA]</scope>
    <source>
        <strain>ATCC BAA-334 / TIGR4</strain>
    </source>
</reference>
<feature type="chain" id="PRO_0000159493" description="Cysteine--tRNA ligase">
    <location>
        <begin position="1"/>
        <end position="447"/>
    </location>
</feature>
<feature type="short sequence motif" description="'HIGH' region">
    <location>
        <begin position="30"/>
        <end position="40"/>
    </location>
</feature>
<feature type="short sequence motif" description="'KMSKS' region">
    <location>
        <begin position="268"/>
        <end position="272"/>
    </location>
</feature>
<feature type="binding site" evidence="1">
    <location>
        <position position="28"/>
    </location>
    <ligand>
        <name>Zn(2+)</name>
        <dbReference type="ChEBI" id="CHEBI:29105"/>
    </ligand>
</feature>
<feature type="binding site" evidence="1">
    <location>
        <position position="211"/>
    </location>
    <ligand>
        <name>Zn(2+)</name>
        <dbReference type="ChEBI" id="CHEBI:29105"/>
    </ligand>
</feature>
<feature type="binding site" evidence="1">
    <location>
        <position position="236"/>
    </location>
    <ligand>
        <name>Zn(2+)</name>
        <dbReference type="ChEBI" id="CHEBI:29105"/>
    </ligand>
</feature>
<feature type="binding site" evidence="1">
    <location>
        <position position="240"/>
    </location>
    <ligand>
        <name>Zn(2+)</name>
        <dbReference type="ChEBI" id="CHEBI:29105"/>
    </ligand>
</feature>
<feature type="binding site" evidence="1">
    <location>
        <position position="271"/>
    </location>
    <ligand>
        <name>ATP</name>
        <dbReference type="ChEBI" id="CHEBI:30616"/>
    </ligand>
</feature>
<gene>
    <name evidence="1" type="primary">cysS</name>
    <name type="ordered locus">SP_0591</name>
</gene>
<dbReference type="EC" id="6.1.1.16" evidence="1"/>
<dbReference type="EMBL" id="AE005672">
    <property type="protein sequence ID" value="AAK74744.1"/>
    <property type="molecule type" value="Genomic_DNA"/>
</dbReference>
<dbReference type="PIR" id="G95068">
    <property type="entry name" value="G95068"/>
</dbReference>
<dbReference type="RefSeq" id="WP_000591095.1">
    <property type="nucleotide sequence ID" value="NZ_CP155539.1"/>
</dbReference>
<dbReference type="SMR" id="Q97S25"/>
<dbReference type="PaxDb" id="170187-SP_0591"/>
<dbReference type="EnsemblBacteria" id="AAK74744">
    <property type="protein sequence ID" value="AAK74744"/>
    <property type="gene ID" value="SP_0591"/>
</dbReference>
<dbReference type="KEGG" id="spn:SP_0591"/>
<dbReference type="eggNOG" id="COG0215">
    <property type="taxonomic scope" value="Bacteria"/>
</dbReference>
<dbReference type="PhylomeDB" id="Q97S25"/>
<dbReference type="BioCyc" id="SPNE170187:G1FZB-611-MONOMER"/>
<dbReference type="Proteomes" id="UP000000585">
    <property type="component" value="Chromosome"/>
</dbReference>
<dbReference type="GO" id="GO:0005829">
    <property type="term" value="C:cytosol"/>
    <property type="evidence" value="ECO:0007669"/>
    <property type="project" value="TreeGrafter"/>
</dbReference>
<dbReference type="GO" id="GO:0005524">
    <property type="term" value="F:ATP binding"/>
    <property type="evidence" value="ECO:0007669"/>
    <property type="project" value="UniProtKB-UniRule"/>
</dbReference>
<dbReference type="GO" id="GO:0004817">
    <property type="term" value="F:cysteine-tRNA ligase activity"/>
    <property type="evidence" value="ECO:0007669"/>
    <property type="project" value="UniProtKB-UniRule"/>
</dbReference>
<dbReference type="GO" id="GO:0008270">
    <property type="term" value="F:zinc ion binding"/>
    <property type="evidence" value="ECO:0007669"/>
    <property type="project" value="UniProtKB-UniRule"/>
</dbReference>
<dbReference type="GO" id="GO:0006423">
    <property type="term" value="P:cysteinyl-tRNA aminoacylation"/>
    <property type="evidence" value="ECO:0007669"/>
    <property type="project" value="UniProtKB-UniRule"/>
</dbReference>
<dbReference type="CDD" id="cd00672">
    <property type="entry name" value="CysRS_core"/>
    <property type="match status" value="1"/>
</dbReference>
<dbReference type="FunFam" id="1.20.120.640:FF:000002">
    <property type="entry name" value="Cysteine--tRNA ligase"/>
    <property type="match status" value="1"/>
</dbReference>
<dbReference type="FunFam" id="3.40.50.620:FF:000130">
    <property type="entry name" value="Cysteine--tRNA ligase"/>
    <property type="match status" value="1"/>
</dbReference>
<dbReference type="Gene3D" id="1.20.120.640">
    <property type="entry name" value="Anticodon-binding domain of a subclass of class I aminoacyl-tRNA synthetases"/>
    <property type="match status" value="1"/>
</dbReference>
<dbReference type="Gene3D" id="3.40.50.620">
    <property type="entry name" value="HUPs"/>
    <property type="match status" value="1"/>
</dbReference>
<dbReference type="HAMAP" id="MF_00041">
    <property type="entry name" value="Cys_tRNA_synth"/>
    <property type="match status" value="1"/>
</dbReference>
<dbReference type="InterPro" id="IPR015803">
    <property type="entry name" value="Cys-tRNA-ligase"/>
</dbReference>
<dbReference type="InterPro" id="IPR015273">
    <property type="entry name" value="Cys-tRNA-synt_Ia_DALR"/>
</dbReference>
<dbReference type="InterPro" id="IPR024909">
    <property type="entry name" value="Cys-tRNA/MSH_ligase"/>
</dbReference>
<dbReference type="InterPro" id="IPR056411">
    <property type="entry name" value="CysS_C"/>
</dbReference>
<dbReference type="InterPro" id="IPR014729">
    <property type="entry name" value="Rossmann-like_a/b/a_fold"/>
</dbReference>
<dbReference type="InterPro" id="IPR032678">
    <property type="entry name" value="tRNA-synt_1_cat_dom"/>
</dbReference>
<dbReference type="InterPro" id="IPR009080">
    <property type="entry name" value="tRNAsynth_Ia_anticodon-bd"/>
</dbReference>
<dbReference type="NCBIfam" id="TIGR00435">
    <property type="entry name" value="cysS"/>
    <property type="match status" value="1"/>
</dbReference>
<dbReference type="PANTHER" id="PTHR10890:SF3">
    <property type="entry name" value="CYSTEINE--TRNA LIGASE, CYTOPLASMIC"/>
    <property type="match status" value="1"/>
</dbReference>
<dbReference type="PANTHER" id="PTHR10890">
    <property type="entry name" value="CYSTEINYL-TRNA SYNTHETASE"/>
    <property type="match status" value="1"/>
</dbReference>
<dbReference type="Pfam" id="PF23493">
    <property type="entry name" value="CysS_C"/>
    <property type="match status" value="1"/>
</dbReference>
<dbReference type="Pfam" id="PF09190">
    <property type="entry name" value="DALR_2"/>
    <property type="match status" value="1"/>
</dbReference>
<dbReference type="Pfam" id="PF01406">
    <property type="entry name" value="tRNA-synt_1e"/>
    <property type="match status" value="1"/>
</dbReference>
<dbReference type="PRINTS" id="PR00983">
    <property type="entry name" value="TRNASYNTHCYS"/>
</dbReference>
<dbReference type="SMART" id="SM00840">
    <property type="entry name" value="DALR_2"/>
    <property type="match status" value="1"/>
</dbReference>
<dbReference type="SUPFAM" id="SSF47323">
    <property type="entry name" value="Anticodon-binding domain of a subclass of class I aminoacyl-tRNA synthetases"/>
    <property type="match status" value="1"/>
</dbReference>
<dbReference type="SUPFAM" id="SSF52374">
    <property type="entry name" value="Nucleotidylyl transferase"/>
    <property type="match status" value="1"/>
</dbReference>
<keyword id="KW-0030">Aminoacyl-tRNA synthetase</keyword>
<keyword id="KW-0067">ATP-binding</keyword>
<keyword id="KW-0963">Cytoplasm</keyword>
<keyword id="KW-0436">Ligase</keyword>
<keyword id="KW-0479">Metal-binding</keyword>
<keyword id="KW-0547">Nucleotide-binding</keyword>
<keyword id="KW-0648">Protein biosynthesis</keyword>
<keyword id="KW-1185">Reference proteome</keyword>
<keyword id="KW-0862">Zinc</keyword>
<accession>Q97S25</accession>
<evidence type="ECO:0000255" key="1">
    <source>
        <dbReference type="HAMAP-Rule" id="MF_00041"/>
    </source>
</evidence>
<comment type="catalytic activity">
    <reaction evidence="1">
        <text>tRNA(Cys) + L-cysteine + ATP = L-cysteinyl-tRNA(Cys) + AMP + diphosphate</text>
        <dbReference type="Rhea" id="RHEA:17773"/>
        <dbReference type="Rhea" id="RHEA-COMP:9661"/>
        <dbReference type="Rhea" id="RHEA-COMP:9679"/>
        <dbReference type="ChEBI" id="CHEBI:30616"/>
        <dbReference type="ChEBI" id="CHEBI:33019"/>
        <dbReference type="ChEBI" id="CHEBI:35235"/>
        <dbReference type="ChEBI" id="CHEBI:78442"/>
        <dbReference type="ChEBI" id="CHEBI:78517"/>
        <dbReference type="ChEBI" id="CHEBI:456215"/>
        <dbReference type="EC" id="6.1.1.16"/>
    </reaction>
</comment>
<comment type="cofactor">
    <cofactor evidence="1">
        <name>Zn(2+)</name>
        <dbReference type="ChEBI" id="CHEBI:29105"/>
    </cofactor>
    <text evidence="1">Binds 1 zinc ion per subunit.</text>
</comment>
<comment type="subunit">
    <text evidence="1">Monomer.</text>
</comment>
<comment type="subcellular location">
    <subcellularLocation>
        <location evidence="1">Cytoplasm</location>
    </subcellularLocation>
</comment>
<comment type="similarity">
    <text evidence="1">Belongs to the class-I aminoacyl-tRNA synthetase family.</text>
</comment>